<gene>
    <name type="primary">ZIC3</name>
    <name type="synonym">ZNF203</name>
</gene>
<organism>
    <name type="scientific">Homo sapiens</name>
    <name type="common">Human</name>
    <dbReference type="NCBI Taxonomy" id="9606"/>
    <lineage>
        <taxon>Eukaryota</taxon>
        <taxon>Metazoa</taxon>
        <taxon>Chordata</taxon>
        <taxon>Craniata</taxon>
        <taxon>Vertebrata</taxon>
        <taxon>Euteleostomi</taxon>
        <taxon>Mammalia</taxon>
        <taxon>Eutheria</taxon>
        <taxon>Euarchontoglires</taxon>
        <taxon>Primates</taxon>
        <taxon>Haplorrhini</taxon>
        <taxon>Catarrhini</taxon>
        <taxon>Hominidae</taxon>
        <taxon>Homo</taxon>
    </lineage>
</organism>
<proteinExistence type="evidence at protein level"/>
<sequence length="467" mass="50569">MTMLLDGGPQFPGLGVGSFGAPRHHEMPNREPAGMGLNPFGDSTHAAAAAAAAAAFKLSPAAAHDLSSGQSSAFTPQGSGYANALGHHHHHHHHHHHTSQVPSYGGAASAAFNSTREFLFRQRSSGLSEAASGGGQHGLFAGSASSLHAPAGIPEPPSYLLFPGLHEQGAGHPSPTGHVDNNQVHLGLRGELFGRADPYRPVASPRTDPYAAGAQFPNYSPMNMNMGVNVAAHHGPGAFFRYMRQPIKQELSCKWIDEAQLSRPKKSCDRTFSTMHELVTHVTMEHVGGPEQNNHVCYWEECPREGKSFKAKYKLVNHIRVHTGEKPFPCPFPGCGKIFARSENLKIHKRTHTGEKPFKCEFEGCDRRFANSSDRKKHMHVHTSDKPYICKVCDKSYTHPSSLRKHMKVHESQGSDSSPAASSGYESSTPPAIASANSKDTTKTPSAVQTSTSHNPGLPPNFNEWYV</sequence>
<dbReference type="EMBL" id="AF028706">
    <property type="protein sequence ID" value="AAC05594.1"/>
    <property type="molecule type" value="mRNA"/>
</dbReference>
<dbReference type="EMBL" id="EU532020">
    <property type="protein sequence ID" value="ACB30403.1"/>
    <property type="molecule type" value="mRNA"/>
</dbReference>
<dbReference type="EMBL" id="AL035443">
    <property type="status" value="NOT_ANNOTATED_CDS"/>
    <property type="molecule type" value="Genomic_DNA"/>
</dbReference>
<dbReference type="EMBL" id="BC113393">
    <property type="protein sequence ID" value="AAI13394.1"/>
    <property type="molecule type" value="mRNA"/>
</dbReference>
<dbReference type="EMBL" id="BC113395">
    <property type="protein sequence ID" value="AAI13396.1"/>
    <property type="molecule type" value="mRNA"/>
</dbReference>
<dbReference type="CCDS" id="CCDS14663.1">
    <molecule id="O60481-1"/>
</dbReference>
<dbReference type="CCDS" id="CCDS83494.1">
    <molecule id="O60481-2"/>
</dbReference>
<dbReference type="RefSeq" id="NP_001317590.1">
    <molecule id="O60481-2"/>
    <property type="nucleotide sequence ID" value="NM_001330661.1"/>
</dbReference>
<dbReference type="RefSeq" id="NP_003404.1">
    <molecule id="O60481-1"/>
    <property type="nucleotide sequence ID" value="NM_003413.4"/>
</dbReference>
<dbReference type="PDB" id="2EJ4">
    <property type="method" value="NMR"/>
    <property type="chains" value="A=245-326"/>
</dbReference>
<dbReference type="PDB" id="2RPC">
    <property type="method" value="NMR"/>
    <property type="chains" value="A=245-386"/>
</dbReference>
<dbReference type="PDBsum" id="2EJ4"/>
<dbReference type="PDBsum" id="2RPC"/>
<dbReference type="SMR" id="O60481"/>
<dbReference type="BioGRID" id="113379">
    <property type="interactions" value="53"/>
</dbReference>
<dbReference type="FunCoup" id="O60481">
    <property type="interactions" value="1864"/>
</dbReference>
<dbReference type="IntAct" id="O60481">
    <property type="interactions" value="18"/>
</dbReference>
<dbReference type="STRING" id="9606.ENSP00000287538"/>
<dbReference type="GlyGen" id="O60481">
    <property type="glycosylation" value="1 site"/>
</dbReference>
<dbReference type="iPTMnet" id="O60481"/>
<dbReference type="PhosphoSitePlus" id="O60481"/>
<dbReference type="BioMuta" id="ZIC3"/>
<dbReference type="jPOST" id="O60481"/>
<dbReference type="MassIVE" id="O60481"/>
<dbReference type="PaxDb" id="9606-ENSP00000287538"/>
<dbReference type="PeptideAtlas" id="O60481"/>
<dbReference type="ProteomicsDB" id="49422">
    <molecule id="O60481-1"/>
</dbReference>
<dbReference type="ProteomicsDB" id="49423">
    <molecule id="O60481-2"/>
</dbReference>
<dbReference type="Antibodypedia" id="30470">
    <property type="antibodies" value="281 antibodies from 31 providers"/>
</dbReference>
<dbReference type="DNASU" id="7547"/>
<dbReference type="Ensembl" id="ENST00000287538.10">
    <molecule id="O60481-1"/>
    <property type="protein sequence ID" value="ENSP00000287538.5"/>
    <property type="gene ID" value="ENSG00000156925.12"/>
</dbReference>
<dbReference type="Ensembl" id="ENST00000370606.3">
    <molecule id="O60481-2"/>
    <property type="protein sequence ID" value="ENSP00000359638.3"/>
    <property type="gene ID" value="ENSG00000156925.12"/>
</dbReference>
<dbReference type="GeneID" id="7547"/>
<dbReference type="KEGG" id="hsa:7547"/>
<dbReference type="MANE-Select" id="ENST00000287538.10">
    <property type="protein sequence ID" value="ENSP00000287538.5"/>
    <property type="RefSeq nucleotide sequence ID" value="NM_003413.4"/>
    <property type="RefSeq protein sequence ID" value="NP_003404.1"/>
</dbReference>
<dbReference type="UCSC" id="uc004fak.4">
    <molecule id="O60481-1"/>
    <property type="organism name" value="human"/>
</dbReference>
<dbReference type="AGR" id="HGNC:12874"/>
<dbReference type="CTD" id="7547"/>
<dbReference type="DisGeNET" id="7547"/>
<dbReference type="GeneCards" id="ZIC3"/>
<dbReference type="HGNC" id="HGNC:12874">
    <property type="gene designation" value="ZIC3"/>
</dbReference>
<dbReference type="HPA" id="ENSG00000156925">
    <property type="expression patterns" value="Tissue enriched (brain)"/>
</dbReference>
<dbReference type="MalaCards" id="ZIC3"/>
<dbReference type="MIM" id="300265">
    <property type="type" value="gene"/>
</dbReference>
<dbReference type="MIM" id="306955">
    <property type="type" value="phenotype"/>
</dbReference>
<dbReference type="MIM" id="314390">
    <property type="type" value="phenotype"/>
</dbReference>
<dbReference type="neXtProt" id="NX_O60481"/>
<dbReference type="OpenTargets" id="ENSG00000156925"/>
<dbReference type="Orphanet" id="216718">
    <property type="disease" value="Isolated congenitally uncorrected transposition of the great arteries"/>
</dbReference>
<dbReference type="Orphanet" id="157769">
    <property type="disease" value="Situs ambiguus"/>
</dbReference>
<dbReference type="PharmGKB" id="PA37463"/>
<dbReference type="VEuPathDB" id="HostDB:ENSG00000156925"/>
<dbReference type="eggNOG" id="KOG1721">
    <property type="taxonomic scope" value="Eukaryota"/>
</dbReference>
<dbReference type="GeneTree" id="ENSGT00940000160788"/>
<dbReference type="HOGENOM" id="CLU_002678_37_1_1"/>
<dbReference type="InParanoid" id="O60481"/>
<dbReference type="OMA" id="GTPRHHD"/>
<dbReference type="OrthoDB" id="3214149at2759"/>
<dbReference type="PAN-GO" id="O60481">
    <property type="GO annotations" value="5 GO annotations based on evolutionary models"/>
</dbReference>
<dbReference type="PhylomeDB" id="O60481"/>
<dbReference type="TreeFam" id="TF351425"/>
<dbReference type="PathwayCommons" id="O60481"/>
<dbReference type="Reactome" id="R-HSA-2892247">
    <property type="pathway name" value="POU5F1 (OCT4), SOX2, NANOG activate genes related to proliferation"/>
</dbReference>
<dbReference type="Reactome" id="R-HSA-452723">
    <property type="pathway name" value="Transcriptional regulation of pluripotent stem cells"/>
</dbReference>
<dbReference type="SignaLink" id="O60481"/>
<dbReference type="SIGNOR" id="O60481"/>
<dbReference type="BioGRID-ORCS" id="7547">
    <property type="hits" value="8 hits in 789 CRISPR screens"/>
</dbReference>
<dbReference type="EvolutionaryTrace" id="O60481"/>
<dbReference type="GeneWiki" id="ZIC3"/>
<dbReference type="GenomeRNAi" id="7547"/>
<dbReference type="Pharos" id="O60481">
    <property type="development level" value="Tbio"/>
</dbReference>
<dbReference type="PRO" id="PR:O60481"/>
<dbReference type="Proteomes" id="UP000005640">
    <property type="component" value="Chromosome X"/>
</dbReference>
<dbReference type="RNAct" id="O60481">
    <property type="molecule type" value="protein"/>
</dbReference>
<dbReference type="Bgee" id="ENSG00000156925">
    <property type="expression patterns" value="Expressed in right hemisphere of cerebellum and 55 other cell types or tissues"/>
</dbReference>
<dbReference type="GO" id="GO:0005737">
    <property type="term" value="C:cytoplasm"/>
    <property type="evidence" value="ECO:0000250"/>
    <property type="project" value="UniProtKB"/>
</dbReference>
<dbReference type="GO" id="GO:0005654">
    <property type="term" value="C:nucleoplasm"/>
    <property type="evidence" value="ECO:0000314"/>
    <property type="project" value="HPA"/>
</dbReference>
<dbReference type="GO" id="GO:0005634">
    <property type="term" value="C:nucleus"/>
    <property type="evidence" value="ECO:0000250"/>
    <property type="project" value="UniProtKB"/>
</dbReference>
<dbReference type="GO" id="GO:0001228">
    <property type="term" value="F:DNA-binding transcription activator activity, RNA polymerase II-specific"/>
    <property type="evidence" value="ECO:0000314"/>
    <property type="project" value="NTNU_SB"/>
</dbReference>
<dbReference type="GO" id="GO:0003700">
    <property type="term" value="F:DNA-binding transcription factor activity"/>
    <property type="evidence" value="ECO:0000314"/>
    <property type="project" value="UniProtKB"/>
</dbReference>
<dbReference type="GO" id="GO:0000981">
    <property type="term" value="F:DNA-binding transcription factor activity, RNA polymerase II-specific"/>
    <property type="evidence" value="ECO:0000318"/>
    <property type="project" value="GO_Central"/>
</dbReference>
<dbReference type="GO" id="GO:0000978">
    <property type="term" value="F:RNA polymerase II cis-regulatory region sequence-specific DNA binding"/>
    <property type="evidence" value="ECO:0000314"/>
    <property type="project" value="NTNU_SB"/>
</dbReference>
<dbReference type="GO" id="GO:0043565">
    <property type="term" value="F:sequence-specific DNA binding"/>
    <property type="evidence" value="ECO:0000314"/>
    <property type="project" value="UniProtKB"/>
</dbReference>
<dbReference type="GO" id="GO:1990837">
    <property type="term" value="F:sequence-specific double-stranded DNA binding"/>
    <property type="evidence" value="ECO:0000314"/>
    <property type="project" value="ARUK-UCL"/>
</dbReference>
<dbReference type="GO" id="GO:0003713">
    <property type="term" value="F:transcription coactivator activity"/>
    <property type="evidence" value="ECO:0007669"/>
    <property type="project" value="Ensembl"/>
</dbReference>
<dbReference type="GO" id="GO:0008270">
    <property type="term" value="F:zinc ion binding"/>
    <property type="evidence" value="ECO:0007669"/>
    <property type="project" value="UniProtKB-KW"/>
</dbReference>
<dbReference type="GO" id="GO:0003228">
    <property type="term" value="P:atrial cardiac muscle tissue development"/>
    <property type="evidence" value="ECO:0007669"/>
    <property type="project" value="Ensembl"/>
</dbReference>
<dbReference type="GO" id="GO:0048318">
    <property type="term" value="P:axial mesoderm development"/>
    <property type="evidence" value="ECO:0007669"/>
    <property type="project" value="Ensembl"/>
</dbReference>
<dbReference type="GO" id="GO:0007417">
    <property type="term" value="P:central nervous system development"/>
    <property type="evidence" value="ECO:0000318"/>
    <property type="project" value="GO_Central"/>
</dbReference>
<dbReference type="GO" id="GO:0035283">
    <property type="term" value="P:central nervous system segmentation"/>
    <property type="evidence" value="ECO:0007669"/>
    <property type="project" value="Ensembl"/>
</dbReference>
<dbReference type="GO" id="GO:1904888">
    <property type="term" value="P:cranial skeletal system development"/>
    <property type="evidence" value="ECO:0007669"/>
    <property type="project" value="Ensembl"/>
</dbReference>
<dbReference type="GO" id="GO:0071907">
    <property type="term" value="P:determination of digestive tract left/right asymmetry"/>
    <property type="evidence" value="ECO:0000315"/>
    <property type="project" value="BHF-UCL"/>
</dbReference>
<dbReference type="GO" id="GO:0035545">
    <property type="term" value="P:determination of left/right asymmetry in nervous system"/>
    <property type="evidence" value="ECO:0007669"/>
    <property type="project" value="Ensembl"/>
</dbReference>
<dbReference type="GO" id="GO:0007368">
    <property type="term" value="P:determination of left/right symmetry"/>
    <property type="evidence" value="ECO:0000315"/>
    <property type="project" value="BHF-UCL"/>
</dbReference>
<dbReference type="GO" id="GO:0071910">
    <property type="term" value="P:determination of liver left/right asymmetry"/>
    <property type="evidence" value="ECO:0000315"/>
    <property type="project" value="BHF-UCL"/>
</dbReference>
<dbReference type="GO" id="GO:0035469">
    <property type="term" value="P:determination of pancreatic left/right asymmetry"/>
    <property type="evidence" value="ECO:0000315"/>
    <property type="project" value="BHF-UCL"/>
</dbReference>
<dbReference type="GO" id="GO:0009880">
    <property type="term" value="P:embryonic pattern specification"/>
    <property type="evidence" value="ECO:0007669"/>
    <property type="project" value="Ensembl"/>
</dbReference>
<dbReference type="GO" id="GO:0060324">
    <property type="term" value="P:face development"/>
    <property type="evidence" value="ECO:0007669"/>
    <property type="project" value="Ensembl"/>
</dbReference>
<dbReference type="GO" id="GO:0030718">
    <property type="term" value="P:germ-line stem cell population maintenance"/>
    <property type="evidence" value="ECO:0007669"/>
    <property type="project" value="Ensembl"/>
</dbReference>
<dbReference type="GO" id="GO:0001947">
    <property type="term" value="P:heart looping"/>
    <property type="evidence" value="ECO:0000315"/>
    <property type="project" value="BHF-UCL"/>
</dbReference>
<dbReference type="GO" id="GO:0021766">
    <property type="term" value="P:hippocampus development"/>
    <property type="evidence" value="ECO:0007669"/>
    <property type="project" value="Ensembl"/>
</dbReference>
<dbReference type="GO" id="GO:0070986">
    <property type="term" value="P:left/right axis specification"/>
    <property type="evidence" value="ECO:0007669"/>
    <property type="project" value="Ensembl"/>
</dbReference>
<dbReference type="GO" id="GO:0035108">
    <property type="term" value="P:limb morphogenesis"/>
    <property type="evidence" value="ECO:0007669"/>
    <property type="project" value="Ensembl"/>
</dbReference>
<dbReference type="GO" id="GO:0030324">
    <property type="term" value="P:lung development"/>
    <property type="evidence" value="ECO:0000315"/>
    <property type="project" value="BHF-UCL"/>
</dbReference>
<dbReference type="GO" id="GO:0042789">
    <property type="term" value="P:mRNA transcription by RNA polymerase II"/>
    <property type="evidence" value="ECO:0007669"/>
    <property type="project" value="Ensembl"/>
</dbReference>
<dbReference type="GO" id="GO:0001840">
    <property type="term" value="P:neural plate development"/>
    <property type="evidence" value="ECO:0007669"/>
    <property type="project" value="Ensembl"/>
</dbReference>
<dbReference type="GO" id="GO:0030182">
    <property type="term" value="P:neuron differentiation"/>
    <property type="evidence" value="ECO:0007669"/>
    <property type="project" value="Ensembl"/>
</dbReference>
<dbReference type="GO" id="GO:0021772">
    <property type="term" value="P:olfactory bulb development"/>
    <property type="evidence" value="ECO:0007669"/>
    <property type="project" value="Ensembl"/>
</dbReference>
<dbReference type="GO" id="GO:0042473">
    <property type="term" value="P:outer ear morphogenesis"/>
    <property type="evidence" value="ECO:0007669"/>
    <property type="project" value="Ensembl"/>
</dbReference>
<dbReference type="GO" id="GO:0048339">
    <property type="term" value="P:paraxial mesoderm development"/>
    <property type="evidence" value="ECO:0007669"/>
    <property type="project" value="Ensembl"/>
</dbReference>
<dbReference type="GO" id="GO:0045893">
    <property type="term" value="P:positive regulation of DNA-templated transcription"/>
    <property type="evidence" value="ECO:0000250"/>
    <property type="project" value="UniProtKB"/>
</dbReference>
<dbReference type="GO" id="GO:0045944">
    <property type="term" value="P:positive regulation of transcription by RNA polymerase II"/>
    <property type="evidence" value="ECO:0000314"/>
    <property type="project" value="UniProtKB"/>
</dbReference>
<dbReference type="GO" id="GO:0090009">
    <property type="term" value="P:primitive streak formation"/>
    <property type="evidence" value="ECO:0007669"/>
    <property type="project" value="Ensembl"/>
</dbReference>
<dbReference type="GO" id="GO:0001501">
    <property type="term" value="P:skeletal system development"/>
    <property type="evidence" value="ECO:0007669"/>
    <property type="project" value="Ensembl"/>
</dbReference>
<dbReference type="GO" id="GO:0007224">
    <property type="term" value="P:smoothened signaling pathway"/>
    <property type="evidence" value="ECO:0007669"/>
    <property type="project" value="Ensembl"/>
</dbReference>
<dbReference type="GO" id="GO:0048863">
    <property type="term" value="P:stem cell differentiation"/>
    <property type="evidence" value="ECO:0007669"/>
    <property type="project" value="Ensembl"/>
</dbReference>
<dbReference type="FunFam" id="3.30.160.60:FF:000035">
    <property type="entry name" value="Zinc finger protein ZIC 1"/>
    <property type="match status" value="1"/>
</dbReference>
<dbReference type="FunFam" id="3.30.160.60:FF:000039">
    <property type="entry name" value="Zinc finger protein ZIC 1"/>
    <property type="match status" value="1"/>
</dbReference>
<dbReference type="FunFam" id="3.30.160.60:FF:000041">
    <property type="entry name" value="Zinc finger protein ZIC 1"/>
    <property type="match status" value="1"/>
</dbReference>
<dbReference type="FunFam" id="3.30.160.60:FF:001330">
    <property type="entry name" value="Zinc finger protein ZIC 4"/>
    <property type="match status" value="1"/>
</dbReference>
<dbReference type="Gene3D" id="3.30.160.60">
    <property type="entry name" value="Classic Zinc Finger"/>
    <property type="match status" value="4"/>
</dbReference>
<dbReference type="InterPro" id="IPR043359">
    <property type="entry name" value="GLI-like"/>
</dbReference>
<dbReference type="InterPro" id="IPR056436">
    <property type="entry name" value="Znf-C2H2_ZIC1-5/GLI1-3-like"/>
</dbReference>
<dbReference type="InterPro" id="IPR036236">
    <property type="entry name" value="Znf_C2H2_sf"/>
</dbReference>
<dbReference type="InterPro" id="IPR013087">
    <property type="entry name" value="Znf_C2H2_type"/>
</dbReference>
<dbReference type="InterPro" id="IPR041643">
    <property type="entry name" value="Znf_ZIC"/>
</dbReference>
<dbReference type="PANTHER" id="PTHR45718">
    <property type="entry name" value="TRANSCRIPTIONAL ACTIVATOR CUBITUS INTERRUPTUS"/>
    <property type="match status" value="1"/>
</dbReference>
<dbReference type="PANTHER" id="PTHR45718:SF4">
    <property type="entry name" value="TRANSCRIPTIONAL ACTIVATOR CUBITUS INTERRUPTUS"/>
    <property type="match status" value="1"/>
</dbReference>
<dbReference type="Pfam" id="PF00096">
    <property type="entry name" value="zf-C2H2"/>
    <property type="match status" value="3"/>
</dbReference>
<dbReference type="Pfam" id="PF23561">
    <property type="entry name" value="zf-C2H2_15"/>
    <property type="match status" value="1"/>
</dbReference>
<dbReference type="Pfam" id="PF18366">
    <property type="entry name" value="zf_ZIC"/>
    <property type="match status" value="1"/>
</dbReference>
<dbReference type="SMART" id="SM00355">
    <property type="entry name" value="ZnF_C2H2"/>
    <property type="match status" value="5"/>
</dbReference>
<dbReference type="SUPFAM" id="SSF57667">
    <property type="entry name" value="beta-beta-alpha zinc fingers"/>
    <property type="match status" value="2"/>
</dbReference>
<dbReference type="PROSITE" id="PS00028">
    <property type="entry name" value="ZINC_FINGER_C2H2_1"/>
    <property type="match status" value="3"/>
</dbReference>
<dbReference type="PROSITE" id="PS50157">
    <property type="entry name" value="ZINC_FINGER_C2H2_2"/>
    <property type="match status" value="4"/>
</dbReference>
<accession>O60481</accession>
<accession>B2CNW4</accession>
<accession>Q14DE5</accession>
<accession>Q5JY75</accession>
<comment type="function">
    <text evidence="7">Acts as a transcriptional activator. Required in the earliest stages in both axial midline development and left-right (LR) asymmetry specification. Binds to the minimal GLI-consensus sequence 5'-GGGTGGTC-3'.</text>
</comment>
<comment type="subunit">
    <text evidence="1 7 8">Interacts (via the C2H2-type domains 3, 4 and 5) with MDFIC (via the C2H2-type domains 3, 4 and 5); the interaction reduces its transcriptional activity (By similarity). Interacts with KPNA1 and KPNA6. Interacts (via C2H2-type domains 3, 4 and 5) with GLI3; the interaction enhances its transcriptional activity.</text>
</comment>
<comment type="subcellular location">
    <subcellularLocation>
        <location>Nucleus</location>
    </subcellularLocation>
    <subcellularLocation>
        <location evidence="1">Cytoplasm</location>
    </subcellularLocation>
    <text evidence="1">Localizes in the cytoplasm in presence of MDFIC overexpression (By similarity). Translocation to the nucleus requires KPNA1 or KPNA6.</text>
</comment>
<comment type="alternative products">
    <event type="alternative splicing"/>
    <isoform>
        <id>O60481-1</id>
        <name>1</name>
        <name>ZIC3-A</name>
        <sequence type="displayed"/>
    </isoform>
    <isoform>
        <id>O60481-2</id>
        <name>2</name>
        <name>ZIC3-B</name>
        <sequence type="described" ref="VSP_044010"/>
    </isoform>
</comment>
<comment type="domain">
    <text evidence="1">The C2H2-type 3, 4 and 5 zinc finger domains are necessary for transcription activation.</text>
</comment>
<comment type="disease" evidence="4 6 7 8 10 11">
    <disease id="DI-02463">
        <name>Heterotaxy, visceral, 1, X-linked</name>
        <acronym>HTX1</acronym>
        <description>A form of visceral heterotaxy, a complex disorder due to disruption of the normal left-right asymmetry of the thoracoabdominal organs. Visceral heterotaxy or situs ambiguus results in randomization of the placement of visceral organs, including the heart, lungs, liver, spleen, and stomach. The organs are oriented randomly with respect to the left-right axis and with respect to one another. It can be associated with a variety of congenital defects including cardiac malformations.</description>
        <dbReference type="MIM" id="306955"/>
    </disease>
    <text>The disease is caused by variants affecting the gene represented in this entry.</text>
</comment>
<comment type="disease" evidence="9 10">
    <disease id="DI-02462">
        <name>VACTERL association X-linked with or without hydrocephalus</name>
        <acronym>VACTERLX</acronym>
        <description>A syndrome characterized by a non-random association of congenital defects. Affected individuals manifest vertebral anomalies (V), anal atresia (A), cardiac malformations (C), tracheoesophageal fistula (TE), renal anomalies (R) such as urethral atresia with hydronephrosis, and limb anomalies (L) such as hexadactyly, humeral hypoplasia, radial aplasia, and proximally placed thumb. Some patients may have hydrocephalus. Some cases of VACTERL-H are associated with increased chromosome breakage and rearrangement.</description>
        <dbReference type="MIM" id="314390"/>
    </disease>
    <text>The disease is caused by variants affecting the gene represented in this entry.</text>
</comment>
<comment type="disease" evidence="4 7 10">
    <disease id="DI-03598">
        <name>Congenital heart defects, multiple types, 1, X-linked</name>
        <acronym>CHTD1</acronym>
        <description>A disorder characterized by congenital developmental abnormalities involving structures of the heart. Common defects include transposition of the great arteries, aortic stenosis, atrial septal defect, ventricular septal defect, pulmonic stenosis, and patent ductus arteriosus. The etiology of CHTD is complex, with contributions from environmental exposure, chromosomal abnormalities, and gene defects. Some patients with CHTD also have cardiac arrhythmias, which may be due to the anatomic defect itself or to surgical interventions.</description>
        <dbReference type="MIM" id="306955"/>
    </disease>
    <text>The disease is caused by variants affecting the gene represented in this entry.</text>
</comment>
<comment type="similarity">
    <text evidence="12">Belongs to the GLI C2H2-type zinc-finger protein family.</text>
</comment>
<evidence type="ECO:0000250" key="1"/>
<evidence type="ECO:0000255" key="2">
    <source>
        <dbReference type="PROSITE-ProRule" id="PRU00042"/>
    </source>
</evidence>
<evidence type="ECO:0000256" key="3">
    <source>
        <dbReference type="SAM" id="MobiDB-lite"/>
    </source>
</evidence>
<evidence type="ECO:0000269" key="4">
    <source>
    </source>
</evidence>
<evidence type="ECO:0000269" key="5">
    <source>
    </source>
</evidence>
<evidence type="ECO:0000269" key="6">
    <source>
    </source>
</evidence>
<evidence type="ECO:0000269" key="7">
    <source>
    </source>
</evidence>
<evidence type="ECO:0000269" key="8">
    <source>
    </source>
</evidence>
<evidence type="ECO:0000269" key="9">
    <source>
    </source>
</evidence>
<evidence type="ECO:0000269" key="10">
    <source>
    </source>
</evidence>
<evidence type="ECO:0000269" key="11">
    <source>
    </source>
</evidence>
<evidence type="ECO:0000305" key="12"/>
<evidence type="ECO:0007744" key="13">
    <source>
    </source>
</evidence>
<evidence type="ECO:0007829" key="14">
    <source>
        <dbReference type="PDB" id="2EJ4"/>
    </source>
</evidence>
<evidence type="ECO:0007829" key="15">
    <source>
        <dbReference type="PDB" id="2RPC"/>
    </source>
</evidence>
<keyword id="KW-0002">3D-structure</keyword>
<keyword id="KW-0010">Activator</keyword>
<keyword id="KW-0025">Alternative splicing</keyword>
<keyword id="KW-0963">Cytoplasm</keyword>
<keyword id="KW-0217">Developmental protein</keyword>
<keyword id="KW-0221">Differentiation</keyword>
<keyword id="KW-0225">Disease variant</keyword>
<keyword id="KW-0238">DNA-binding</keyword>
<keyword id="KW-1056">Heterotaxy</keyword>
<keyword id="KW-1017">Isopeptide bond</keyword>
<keyword id="KW-0479">Metal-binding</keyword>
<keyword id="KW-0524">Neurogenesis</keyword>
<keyword id="KW-0539">Nucleus</keyword>
<keyword id="KW-1267">Proteomics identification</keyword>
<keyword id="KW-1185">Reference proteome</keyword>
<keyword id="KW-0677">Repeat</keyword>
<keyword id="KW-0804">Transcription</keyword>
<keyword id="KW-0805">Transcription regulation</keyword>
<keyword id="KW-0818">Triplet repeat expansion</keyword>
<keyword id="KW-0832">Ubl conjugation</keyword>
<keyword id="KW-0862">Zinc</keyword>
<keyword id="KW-0863">Zinc-finger</keyword>
<name>ZIC3_HUMAN</name>
<protein>
    <recommendedName>
        <fullName>Zinc finger protein ZIC 3</fullName>
    </recommendedName>
    <alternativeName>
        <fullName>Zinc finger protein 203</fullName>
    </alternativeName>
    <alternativeName>
        <fullName>Zinc finger protein of the cerebellum 3</fullName>
    </alternativeName>
</protein>
<feature type="chain" id="PRO_0000047250" description="Zinc finger protein ZIC 3">
    <location>
        <begin position="1"/>
        <end position="467"/>
    </location>
</feature>
<feature type="zinc finger region" description="C2H2-type 1; atypical" evidence="2">
    <location>
        <begin position="251"/>
        <end position="286"/>
    </location>
</feature>
<feature type="zinc finger region" description="C2H2-type 2; atypical" evidence="2">
    <location>
        <begin position="295"/>
        <end position="322"/>
    </location>
</feature>
<feature type="zinc finger region" description="C2H2-type 3" evidence="2">
    <location>
        <begin position="328"/>
        <end position="352"/>
    </location>
</feature>
<feature type="zinc finger region" description="C2H2-type 4" evidence="2">
    <location>
        <begin position="358"/>
        <end position="382"/>
    </location>
</feature>
<feature type="zinc finger region" description="C2H2-type 5" evidence="2">
    <location>
        <begin position="388"/>
        <end position="410"/>
    </location>
</feature>
<feature type="region of interest" description="Disordered" evidence="3">
    <location>
        <begin position="66"/>
        <end position="107"/>
    </location>
</feature>
<feature type="region of interest" description="Disordered" evidence="3">
    <location>
        <begin position="404"/>
        <end position="467"/>
    </location>
</feature>
<feature type="short sequence motif" description="Nuclear localization signal">
    <location>
        <begin position="297"/>
        <end position="322"/>
    </location>
</feature>
<feature type="short sequence motif" description="Nuclear localization signal">
    <location>
        <begin position="330"/>
        <end position="352"/>
    </location>
</feature>
<feature type="compositionally biased region" description="Polar residues" evidence="3">
    <location>
        <begin position="67"/>
        <end position="80"/>
    </location>
</feature>
<feature type="compositionally biased region" description="Basic residues" evidence="3">
    <location>
        <begin position="86"/>
        <end position="98"/>
    </location>
</feature>
<feature type="compositionally biased region" description="Low complexity" evidence="3">
    <location>
        <begin position="412"/>
        <end position="428"/>
    </location>
</feature>
<feature type="compositionally biased region" description="Polar residues" evidence="3">
    <location>
        <begin position="435"/>
        <end position="455"/>
    </location>
</feature>
<feature type="cross-link" description="Glycyl lysine isopeptide (Lys-Gly) (interchain with G-Cter in SUMO2)" evidence="13">
    <location>
        <position position="248"/>
    </location>
</feature>
<feature type="splice variant" id="VSP_044010" description="In isoform 2." evidence="12">
    <original>VHESQGSDSSPAASSGYESSTPPAIASANSKDTTKTPSAVQTSTSHNPGLPPNFNEWYV</original>
    <variation>CCPAWYPGQSLIPDEELDTDVGMQQPALHNTTYPKCRVNAEPTVQEMIY</variation>
    <location>
        <begin position="409"/>
        <end position="467"/>
    </location>
</feature>
<feature type="sequence variant" id="VAR_071330" description="In HTX1 and CHTD1; uncertain significance; no effect on its transcriptional activator activity or subcellular localization; dbSNP:rs147232392." evidence="10">
    <original>G</original>
    <variation>C</variation>
    <location>
        <position position="17"/>
    </location>
</feature>
<feature type="sequence variant" id="VAR_066626" description="In VACTERLX." evidence="9">
    <original>A</original>
    <variation>AAA</variation>
    <location>
        <position position="46"/>
    </location>
</feature>
<feature type="sequence variant" id="VAR_071331" description="In CHTD1; uncertain significance; no effect on its transcriptional activator activity or subcellular localization." evidence="10">
    <original>A</original>
    <variation>AA</variation>
    <location>
        <position position="53"/>
    </location>
</feature>
<feature type="sequence variant" id="VAR_071332" description="In CHTD1; does not affect its transcriptional activator activity; decrease in nuclear localization; dbSNP:rs373628598." evidence="10">
    <original>S</original>
    <variation>C</variation>
    <location>
        <position position="109"/>
    </location>
</feature>
<feature type="sequence variant" id="VAR_025632" description="In HTX1 and CHTD1; lacks DNA-binding; does not inhibit transcriptional activation and interaction with GLI3; decrease in nuclear localization; dbSNP:rs104894963." evidence="4 5 7 10">
    <original>P</original>
    <variation>A</variation>
    <location>
        <position position="217"/>
    </location>
</feature>
<feature type="sequence variant" id="VAR_025633" description="In HTX1; increases strongly its cytoplasmic localization; lacks DNA-binding; does not inhibit transcriptional activation and interaction with GLI3; dbSNP:rs104894961." evidence="4 7 8">
    <original>C</original>
    <variation>S</variation>
    <location>
        <position position="253"/>
    </location>
</feature>
<feature type="sequence variant" id="VAR_042416" description="In HTX1; decreases protein expression and transcriptional activity and increases its cytoplasmic localization; dbSNP:rs122463168." evidence="6 8">
    <original>W</original>
    <variation>G</variation>
    <location>
        <position position="255"/>
    </location>
</feature>
<feature type="sequence variant" id="VAR_025634" description="In HTX1; inreases weakly its cytoplasmic localization; lacks DNA-binding; does not inhibit transcriptional activation and interaction with GLI3." evidence="7 8 11">
    <original>H</original>
    <variation>R</variation>
    <location>
        <position position="286"/>
    </location>
</feature>
<feature type="sequence variant" id="VAR_071333" description="In VACTERLX; decrease in transcriptional activator activity; significant decrease in nuclear localization." evidence="10">
    <original>H</original>
    <variation>N</variation>
    <location>
        <position position="318"/>
    </location>
</feature>
<feature type="sequence variant" id="VAR_007753" description="In HTX1; lacks DNA-binding; does not inhibit transcriptional activation and interaction with GLI3; dbSNP:rs122462165." evidence="7 11">
    <original>T</original>
    <variation>M</variation>
    <location>
        <position position="323"/>
    </location>
</feature>
<feature type="sequence variant" id="VAR_025635" description="In HTX1; lacks DNA-binding; does not inhibit transcriptional activation and interaction with GLI3; dbSNP:rs104894962." evidence="4 7">
    <original>K</original>
    <variation>E</variation>
    <location>
        <position position="405"/>
    </location>
</feature>
<feature type="sequence variant" id="VAR_071334" description="In CHTD1; Increase in transcriptional activator activity; decrease in nuclear localization." evidence="10">
    <original>A</original>
    <variation>G</variation>
    <location>
        <position position="447"/>
    </location>
</feature>
<feature type="mutagenesis site" description="Increases weakly its cytoplasmic localization." evidence="8">
    <original>C</original>
    <variation>S</variation>
    <location>
        <position position="268"/>
    </location>
</feature>
<feature type="mutagenesis site" description="Increases its cytoplasmic localization." evidence="8">
    <original>H</original>
    <variation>R</variation>
    <location>
        <position position="281"/>
    </location>
</feature>
<feature type="mutagenesis site" description="Increases its cytoplasmic localization." evidence="8">
    <original>R</original>
    <variation>M</variation>
    <location>
        <position position="304"/>
    </location>
</feature>
<feature type="mutagenesis site" description="Increases its cytoplasmic localization." evidence="8">
    <original>K</original>
    <variation>M</variation>
    <location>
        <position position="307"/>
    </location>
</feature>
<feature type="mutagenesis site" description="Increases its cytoplasmic localization." evidence="8">
    <original>K</original>
    <variation>M</variation>
    <location>
        <position position="310"/>
    </location>
</feature>
<feature type="mutagenesis site" description="Increases its cytoplasmic localization." evidence="8">
    <original>K</original>
    <variation>M</variation>
    <location>
        <position position="312"/>
    </location>
</feature>
<feature type="mutagenesis site" description="Does not increase its cytoplasmic localization." evidence="8">
    <original>K</original>
    <variation>M</variation>
    <location>
        <position position="314"/>
    </location>
</feature>
<feature type="mutagenesis site" description="Increases its cytoplasmic localization. Does not interact with KPNA1 and KPNA6 and increases strongly its cytoplasmic localization; when associated with A-337; A-341; A-346; A-349 and A-350." evidence="8">
    <original>R</original>
    <variation>A</variation>
    <location>
        <position position="320"/>
    </location>
</feature>
<feature type="mutagenesis site" description="Does not increase its cytoplasmic localization." evidence="8">
    <original>K</original>
    <variation>M</variation>
    <location>
        <position position="326"/>
    </location>
</feature>
<feature type="mutagenesis site" description="Increases its cytoplasmic localization. Does not interact with KPNA1 and KPNA6 and increases strongly its cytoplasmic localization; when associated with A-320; A-341; A-346; A-349 and A-350." evidence="8">
    <original>K</original>
    <variation>A</variation>
    <location>
        <position position="337"/>
    </location>
</feature>
<feature type="mutagenesis site" description="Increases its cytoplasmic localization. Does not interact with KPNA1 and KPNA6 and increases strongly its cytoplasmic localization; when associated with A-320; A-337; A-346; A-349 and A-350." evidence="8">
    <original>R</original>
    <variation>A</variation>
    <location>
        <position position="341"/>
    </location>
</feature>
<feature type="mutagenesis site" description="Increases its cytoplasmic localization. Does not interact with KPNA1 and KPNA6 and increases strongly its cytoplasmic localization; when associated with A-320; A-337; A-341; A-349 and A-350." evidence="8">
    <original>K</original>
    <variation>A</variation>
    <location>
        <position position="346"/>
    </location>
</feature>
<feature type="mutagenesis site" description="Increases its cytoplasmic localization. Does not interacts with KPNA1 and KPNA6 and increases strongly its cytoplasmic localization; when associated with A-320; A-337; A-341; A-346 and A-350." evidence="8">
    <original>K</original>
    <variation>A</variation>
    <location>
        <position position="349"/>
    </location>
</feature>
<feature type="mutagenesis site" description="Increases its cytoplasmic localization. Does not interact with KPNA1 and KPNA6 and increases strongly its cytoplasmic localization; when associated with A-320; A-337; A-341; A-346 and A-349." evidence="8">
    <original>R</original>
    <variation>A</variation>
    <location>
        <position position="350"/>
    </location>
</feature>
<feature type="mutagenesis site" description="Does not increase its cytoplasmic localization." evidence="8">
    <original>K</original>
    <variation>A</variation>
    <location>
        <position position="356"/>
    </location>
</feature>
<feature type="strand" evidence="14">
    <location>
        <begin position="261"/>
        <end position="264"/>
    </location>
</feature>
<feature type="strand" evidence="15">
    <location>
        <begin position="272"/>
        <end position="274"/>
    </location>
</feature>
<feature type="helix" evidence="14">
    <location>
        <begin position="275"/>
        <end position="284"/>
    </location>
</feature>
<feature type="turn" evidence="14">
    <location>
        <begin position="285"/>
        <end position="287"/>
    </location>
</feature>
<feature type="helix" evidence="14">
    <location>
        <begin position="312"/>
        <end position="323"/>
    </location>
</feature>
<feature type="strand" evidence="15">
    <location>
        <begin position="327"/>
        <end position="329"/>
    </location>
</feature>
<feature type="turn" evidence="15">
    <location>
        <begin position="333"/>
        <end position="335"/>
    </location>
</feature>
<feature type="strand" evidence="15">
    <location>
        <begin position="338"/>
        <end position="340"/>
    </location>
</feature>
<feature type="helix" evidence="15">
    <location>
        <begin position="342"/>
        <end position="349"/>
    </location>
</feature>
<feature type="turn" evidence="15">
    <location>
        <begin position="350"/>
        <end position="352"/>
    </location>
</feature>
<feature type="strand" evidence="15">
    <location>
        <begin position="369"/>
        <end position="371"/>
    </location>
</feature>
<feature type="helix" evidence="15">
    <location>
        <begin position="372"/>
        <end position="377"/>
    </location>
</feature>
<feature type="turn" evidence="15">
    <location>
        <begin position="380"/>
        <end position="383"/>
    </location>
</feature>
<reference key="1">
    <citation type="journal article" date="1997" name="Nat. Genet.">
        <title>X-linked situs abnormalities result from mutations in ZIC3.</title>
        <authorList>
            <person name="Gebbia M."/>
            <person name="Ferrero G.B."/>
            <person name="Pilia G."/>
            <person name="Bassi M.T."/>
            <person name="Aylsworth A.S."/>
            <person name="Penman-Splitt M."/>
            <person name="Bird L.M."/>
            <person name="Bamforth J.S."/>
            <person name="Burn J."/>
            <person name="Schlessiner D."/>
            <person name="Nelson D.L."/>
            <person name="Casey B."/>
        </authorList>
    </citation>
    <scope>NUCLEOTIDE SEQUENCE [MRNA] (ISOFORM 1)</scope>
    <scope>VARIANTS HTX1 ARG-286 AND MET-323</scope>
</reference>
<reference key="2">
    <citation type="journal article" date="2009" name="PLoS Genet.">
        <title>Genome-wide analysis of histidine repeats reveals their role in the localization of human proteins to the nuclear speckles compartment.</title>
        <authorList>
            <person name="Salichs E."/>
            <person name="Ledda A."/>
            <person name="Mularoni L."/>
            <person name="Alba M.M."/>
            <person name="de la Luna S."/>
        </authorList>
    </citation>
    <scope>NUCLEOTIDE SEQUENCE [MRNA] (ISOFORM 1)</scope>
</reference>
<reference key="3">
    <citation type="journal article" date="2005" name="Nature">
        <title>The DNA sequence of the human X chromosome.</title>
        <authorList>
            <person name="Ross M.T."/>
            <person name="Grafham D.V."/>
            <person name="Coffey A.J."/>
            <person name="Scherer S."/>
            <person name="McLay K."/>
            <person name="Muzny D."/>
            <person name="Platzer M."/>
            <person name="Howell G.R."/>
            <person name="Burrows C."/>
            <person name="Bird C.P."/>
            <person name="Frankish A."/>
            <person name="Lovell F.L."/>
            <person name="Howe K.L."/>
            <person name="Ashurst J.L."/>
            <person name="Fulton R.S."/>
            <person name="Sudbrak R."/>
            <person name="Wen G."/>
            <person name="Jones M.C."/>
            <person name="Hurles M.E."/>
            <person name="Andrews T.D."/>
            <person name="Scott C.E."/>
            <person name="Searle S."/>
            <person name="Ramser J."/>
            <person name="Whittaker A."/>
            <person name="Deadman R."/>
            <person name="Carter N.P."/>
            <person name="Hunt S.E."/>
            <person name="Chen R."/>
            <person name="Cree A."/>
            <person name="Gunaratne P."/>
            <person name="Havlak P."/>
            <person name="Hodgson A."/>
            <person name="Metzker M.L."/>
            <person name="Richards S."/>
            <person name="Scott G."/>
            <person name="Steffen D."/>
            <person name="Sodergren E."/>
            <person name="Wheeler D.A."/>
            <person name="Worley K.C."/>
            <person name="Ainscough R."/>
            <person name="Ambrose K.D."/>
            <person name="Ansari-Lari M.A."/>
            <person name="Aradhya S."/>
            <person name="Ashwell R.I."/>
            <person name="Babbage A.K."/>
            <person name="Bagguley C.L."/>
            <person name="Ballabio A."/>
            <person name="Banerjee R."/>
            <person name="Barker G.E."/>
            <person name="Barlow K.F."/>
            <person name="Barrett I.P."/>
            <person name="Bates K.N."/>
            <person name="Beare D.M."/>
            <person name="Beasley H."/>
            <person name="Beasley O."/>
            <person name="Beck A."/>
            <person name="Bethel G."/>
            <person name="Blechschmidt K."/>
            <person name="Brady N."/>
            <person name="Bray-Allen S."/>
            <person name="Bridgeman A.M."/>
            <person name="Brown A.J."/>
            <person name="Brown M.J."/>
            <person name="Bonnin D."/>
            <person name="Bruford E.A."/>
            <person name="Buhay C."/>
            <person name="Burch P."/>
            <person name="Burford D."/>
            <person name="Burgess J."/>
            <person name="Burrill W."/>
            <person name="Burton J."/>
            <person name="Bye J.M."/>
            <person name="Carder C."/>
            <person name="Carrel L."/>
            <person name="Chako J."/>
            <person name="Chapman J.C."/>
            <person name="Chavez D."/>
            <person name="Chen E."/>
            <person name="Chen G."/>
            <person name="Chen Y."/>
            <person name="Chen Z."/>
            <person name="Chinault C."/>
            <person name="Ciccodicola A."/>
            <person name="Clark S.Y."/>
            <person name="Clarke G."/>
            <person name="Clee C.M."/>
            <person name="Clegg S."/>
            <person name="Clerc-Blankenburg K."/>
            <person name="Clifford K."/>
            <person name="Cobley V."/>
            <person name="Cole C.G."/>
            <person name="Conquer J.S."/>
            <person name="Corby N."/>
            <person name="Connor R.E."/>
            <person name="David R."/>
            <person name="Davies J."/>
            <person name="Davis C."/>
            <person name="Davis J."/>
            <person name="Delgado O."/>
            <person name="Deshazo D."/>
            <person name="Dhami P."/>
            <person name="Ding Y."/>
            <person name="Dinh H."/>
            <person name="Dodsworth S."/>
            <person name="Draper H."/>
            <person name="Dugan-Rocha S."/>
            <person name="Dunham A."/>
            <person name="Dunn M."/>
            <person name="Durbin K.J."/>
            <person name="Dutta I."/>
            <person name="Eades T."/>
            <person name="Ellwood M."/>
            <person name="Emery-Cohen A."/>
            <person name="Errington H."/>
            <person name="Evans K.L."/>
            <person name="Faulkner L."/>
            <person name="Francis F."/>
            <person name="Frankland J."/>
            <person name="Fraser A.E."/>
            <person name="Galgoczy P."/>
            <person name="Gilbert J."/>
            <person name="Gill R."/>
            <person name="Gloeckner G."/>
            <person name="Gregory S.G."/>
            <person name="Gribble S."/>
            <person name="Griffiths C."/>
            <person name="Grocock R."/>
            <person name="Gu Y."/>
            <person name="Gwilliam R."/>
            <person name="Hamilton C."/>
            <person name="Hart E.A."/>
            <person name="Hawes A."/>
            <person name="Heath P.D."/>
            <person name="Heitmann K."/>
            <person name="Hennig S."/>
            <person name="Hernandez J."/>
            <person name="Hinzmann B."/>
            <person name="Ho S."/>
            <person name="Hoffs M."/>
            <person name="Howden P.J."/>
            <person name="Huckle E.J."/>
            <person name="Hume J."/>
            <person name="Hunt P.J."/>
            <person name="Hunt A.R."/>
            <person name="Isherwood J."/>
            <person name="Jacob L."/>
            <person name="Johnson D."/>
            <person name="Jones S."/>
            <person name="de Jong P.J."/>
            <person name="Joseph S.S."/>
            <person name="Keenan S."/>
            <person name="Kelly S."/>
            <person name="Kershaw J.K."/>
            <person name="Khan Z."/>
            <person name="Kioschis P."/>
            <person name="Klages S."/>
            <person name="Knights A.J."/>
            <person name="Kosiura A."/>
            <person name="Kovar-Smith C."/>
            <person name="Laird G.K."/>
            <person name="Langford C."/>
            <person name="Lawlor S."/>
            <person name="Leversha M."/>
            <person name="Lewis L."/>
            <person name="Liu W."/>
            <person name="Lloyd C."/>
            <person name="Lloyd D.M."/>
            <person name="Loulseged H."/>
            <person name="Loveland J.E."/>
            <person name="Lovell J.D."/>
            <person name="Lozado R."/>
            <person name="Lu J."/>
            <person name="Lyne R."/>
            <person name="Ma J."/>
            <person name="Maheshwari M."/>
            <person name="Matthews L.H."/>
            <person name="McDowall J."/>
            <person name="McLaren S."/>
            <person name="McMurray A."/>
            <person name="Meidl P."/>
            <person name="Meitinger T."/>
            <person name="Milne S."/>
            <person name="Miner G."/>
            <person name="Mistry S.L."/>
            <person name="Morgan M."/>
            <person name="Morris S."/>
            <person name="Mueller I."/>
            <person name="Mullikin J.C."/>
            <person name="Nguyen N."/>
            <person name="Nordsiek G."/>
            <person name="Nyakatura G."/>
            <person name="O'dell C.N."/>
            <person name="Okwuonu G."/>
            <person name="Palmer S."/>
            <person name="Pandian R."/>
            <person name="Parker D."/>
            <person name="Parrish J."/>
            <person name="Pasternak S."/>
            <person name="Patel D."/>
            <person name="Pearce A.V."/>
            <person name="Pearson D.M."/>
            <person name="Pelan S.E."/>
            <person name="Perez L."/>
            <person name="Porter K.M."/>
            <person name="Ramsey Y."/>
            <person name="Reichwald K."/>
            <person name="Rhodes S."/>
            <person name="Ridler K.A."/>
            <person name="Schlessinger D."/>
            <person name="Schueler M.G."/>
            <person name="Sehra H.K."/>
            <person name="Shaw-Smith C."/>
            <person name="Shen H."/>
            <person name="Sheridan E.M."/>
            <person name="Shownkeen R."/>
            <person name="Skuce C.D."/>
            <person name="Smith M.L."/>
            <person name="Sotheran E.C."/>
            <person name="Steingruber H.E."/>
            <person name="Steward C.A."/>
            <person name="Storey R."/>
            <person name="Swann R.M."/>
            <person name="Swarbreck D."/>
            <person name="Tabor P.E."/>
            <person name="Taudien S."/>
            <person name="Taylor T."/>
            <person name="Teague B."/>
            <person name="Thomas K."/>
            <person name="Thorpe A."/>
            <person name="Timms K."/>
            <person name="Tracey A."/>
            <person name="Trevanion S."/>
            <person name="Tromans A.C."/>
            <person name="d'Urso M."/>
            <person name="Verduzco D."/>
            <person name="Villasana D."/>
            <person name="Waldron L."/>
            <person name="Wall M."/>
            <person name="Wang Q."/>
            <person name="Warren J."/>
            <person name="Warry G.L."/>
            <person name="Wei X."/>
            <person name="West A."/>
            <person name="Whitehead S.L."/>
            <person name="Whiteley M.N."/>
            <person name="Wilkinson J.E."/>
            <person name="Willey D.L."/>
            <person name="Williams G."/>
            <person name="Williams L."/>
            <person name="Williamson A."/>
            <person name="Williamson H."/>
            <person name="Wilming L."/>
            <person name="Woodmansey R.L."/>
            <person name="Wray P.W."/>
            <person name="Yen J."/>
            <person name="Zhang J."/>
            <person name="Zhou J."/>
            <person name="Zoghbi H."/>
            <person name="Zorilla S."/>
            <person name="Buck D."/>
            <person name="Reinhardt R."/>
            <person name="Poustka A."/>
            <person name="Rosenthal A."/>
            <person name="Lehrach H."/>
            <person name="Meindl A."/>
            <person name="Minx P.J."/>
            <person name="Hillier L.W."/>
            <person name="Willard H.F."/>
            <person name="Wilson R.K."/>
            <person name="Waterston R.H."/>
            <person name="Rice C.M."/>
            <person name="Vaudin M."/>
            <person name="Coulson A."/>
            <person name="Nelson D.L."/>
            <person name="Weinstock G."/>
            <person name="Sulston J.E."/>
            <person name="Durbin R.M."/>
            <person name="Hubbard T."/>
            <person name="Gibbs R.A."/>
            <person name="Beck S."/>
            <person name="Rogers J."/>
            <person name="Bentley D.R."/>
        </authorList>
    </citation>
    <scope>NUCLEOTIDE SEQUENCE [LARGE SCALE GENOMIC DNA]</scope>
</reference>
<reference key="4">
    <citation type="journal article" date="2004" name="Genome Res.">
        <title>The status, quality, and expansion of the NIH full-length cDNA project: the Mammalian Gene Collection (MGC).</title>
        <authorList>
            <consortium name="The MGC Project Team"/>
        </authorList>
    </citation>
    <scope>NUCLEOTIDE SEQUENCE [LARGE SCALE MRNA] (ISOFORM 1)</scope>
    <source>
        <tissue>Brain</tissue>
    </source>
</reference>
<reference key="5">
    <citation type="journal article" date="2008" name="Hum. Mutat.">
        <title>Characterization of the interactions of human ZIC3 mutants with GLI3.</title>
        <authorList>
            <person name="Zhu L."/>
            <person name="Zhou G."/>
            <person name="Poole S."/>
            <person name="Belmont J.W."/>
        </authorList>
    </citation>
    <scope>FUNCTION</scope>
    <scope>INTERACTION WITH GLI3</scope>
    <scope>DNA-BINDING</scope>
    <scope>CHARACTERIZATION OF VARIANTS HTX1 SER-253; ARG-286; MET-323 AND GLU-405</scope>
    <scope>CHARACTERIZATION OF VARIANT CHTD1 ALA-217</scope>
</reference>
<reference key="6">
    <citation type="journal article" date="2011" name="PLoS ONE">
        <title>Identification of a novel ZIC3 isoform and mutation screening in patients with heterotaxy and congenital heart disease.</title>
        <authorList>
            <person name="Bedard J.E."/>
            <person name="Haaning A.M."/>
            <person name="Ware S.M."/>
        </authorList>
    </citation>
    <scope>ALTERNATIVE SPLICING (ISOFORM 2)</scope>
</reference>
<reference key="7">
    <citation type="journal article" date="2011" name="Sci. Signal.">
        <title>System-wide temporal characterization of the proteome and phosphoproteome of human embryonic stem cell differentiation.</title>
        <authorList>
            <person name="Rigbolt K.T."/>
            <person name="Prokhorova T.A."/>
            <person name="Akimov V."/>
            <person name="Henningsen J."/>
            <person name="Johansen P.T."/>
            <person name="Kratchmarova I."/>
            <person name="Kassem M."/>
            <person name="Mann M."/>
            <person name="Olsen J.V."/>
            <person name="Blagoev B."/>
        </authorList>
    </citation>
    <scope>IDENTIFICATION BY MASS SPECTROMETRY [LARGE SCALE ANALYSIS]</scope>
</reference>
<reference key="8">
    <citation type="journal article" date="2017" name="Nat. Struct. Mol. Biol.">
        <title>Site-specific mapping of the human SUMO proteome reveals co-modification with phosphorylation.</title>
        <authorList>
            <person name="Hendriks I.A."/>
            <person name="Lyon D."/>
            <person name="Young C."/>
            <person name="Jensen L.J."/>
            <person name="Vertegaal A.C."/>
            <person name="Nielsen M.L."/>
        </authorList>
    </citation>
    <scope>SUMOYLATION [LARGE SCALE ANALYSIS] AT LYS-248</scope>
    <scope>IDENTIFICATION BY MASS SPECTROMETRY [LARGE SCALE ANALYSIS]</scope>
</reference>
<reference key="9">
    <citation type="journal article" date="2008" name="Hum. Mol. Genet.">
        <title>Functional and structural basis of the nuclear localization signal in the ZIC3 zinc finger domain.</title>
        <authorList>
            <person name="Hatayama M."/>
            <person name="Tomizawa T."/>
            <person name="Sakai-Kato K."/>
            <person name="Bouvagnet P."/>
            <person name="Kose S."/>
            <person name="Imamoto N."/>
            <person name="Yokoyama S."/>
            <person name="Utsunomiya-Tate N."/>
            <person name="Mikoshiba K."/>
            <person name="Kigawa T."/>
            <person name="Aruga J."/>
        </authorList>
    </citation>
    <scope>STRUCTURE BY NMR OF 246-329 IN COMPLEX WITH ZINC IONS</scope>
    <scope>INTERACTION WITH KPNA1 AND KPNA6</scope>
    <scope>CHARACTERIZATION OF VARIANTS HTX1 SER-253; GLY-255 AND ARG-286</scope>
    <scope>MUTAGENESIS OF CYS-268; HIS-281; ARG-304; LYS-307; LYS-310; LYS-312; LYS-314; ARG-320; LYS-326; LYS-337; ARG-341; LYS-346; LYS-349; ARG-350 AND LYS-356</scope>
</reference>
<reference key="10">
    <citation type="journal article" date="2004" name="Am. J. Hum. Genet.">
        <title>Identification and functional analysis of ZIC3 mutations in heterotaxy and related congenital heart defects.</title>
        <authorList>
            <person name="Ware S.M."/>
            <person name="Peng J."/>
            <person name="Zhu L."/>
            <person name="Fernbach S."/>
            <person name="Colicos S."/>
            <person name="Casey B."/>
            <person name="Towbin J."/>
            <person name="Belmont J.W."/>
        </authorList>
    </citation>
    <scope>VARIANT CHTD1 ALA-217</scope>
    <scope>VARIANTS HTX1 SER-253 AND GLU-405</scope>
</reference>
<reference key="11">
    <citation type="journal article" date="2006" name="Science">
        <title>The consensus coding sequences of human breast and colorectal cancers.</title>
        <authorList>
            <person name="Sjoeblom T."/>
            <person name="Jones S."/>
            <person name="Wood L.D."/>
            <person name="Parsons D.W."/>
            <person name="Lin J."/>
            <person name="Barber T.D."/>
            <person name="Mandelker D."/>
            <person name="Leary R.J."/>
            <person name="Ptak J."/>
            <person name="Silliman N."/>
            <person name="Szabo S."/>
            <person name="Buckhaults P."/>
            <person name="Farrell C."/>
            <person name="Meeh P."/>
            <person name="Markowitz S.D."/>
            <person name="Willis J."/>
            <person name="Dawson D."/>
            <person name="Willson J.K.V."/>
            <person name="Gazdar A.F."/>
            <person name="Hartigan J."/>
            <person name="Wu L."/>
            <person name="Liu C."/>
            <person name="Parmigiani G."/>
            <person name="Park B.H."/>
            <person name="Bachman K.E."/>
            <person name="Papadopoulos N."/>
            <person name="Vogelstein B."/>
            <person name="Kinzler K.W."/>
            <person name="Velculescu V.E."/>
        </authorList>
    </citation>
    <scope>VARIANT [LARGE SCALE ANALYSIS] ALA-217</scope>
</reference>
<reference key="12">
    <citation type="journal article" date="2007" name="Hum. Mutat.">
        <title>Elucidation of penetrance variability of a ZIC3 mutation in a family with complex heart defects and functional analysis of ZIC3 mutations in the first zinc finger domain.</title>
        <authorList>
            <person name="Chhin B."/>
            <person name="Hatayama M."/>
            <person name="Bozon D."/>
            <person name="Ogawa M."/>
            <person name="Schoen P."/>
            <person name="Tohmonda T."/>
            <person name="Sassolas F."/>
            <person name="Aruga J."/>
            <person name="Valard A.-G."/>
            <person name="Chen S.-C."/>
            <person name="Bouvagnet P."/>
        </authorList>
    </citation>
    <scope>VARIANT HTX1 GLY-255</scope>
    <scope>CHARACTERIZATION OF VARIANT HTX1 GLY-255</scope>
</reference>
<reference key="13">
    <citation type="journal article" date="2010" name="J. Med. Genet.">
        <title>Polyalanine expansion in the ZIC3 gene leading to X-linked heterotaxy with VACTERL association: a new polyalanine disorder?</title>
        <authorList>
            <person name="Wessels M.W."/>
            <person name="Kuchinka B."/>
            <person name="Heydanus R."/>
            <person name="Smit B.J."/>
            <person name="Dooijes D."/>
            <person name="de Krijger R.R."/>
            <person name="Lequin M.H."/>
            <person name="de Jong E.M."/>
            <person name="Husen M."/>
            <person name="Willems P.J."/>
            <person name="Casey B."/>
        </authorList>
    </citation>
    <scope>VARIANT VACTERLX ALA-ALA-46 INS</scope>
</reference>
<reference key="14">
    <citation type="journal article" date="2014" name="Hum. Mutat.">
        <title>Genetic and functional analyses of ZIC3 variants in congenital heart disease.</title>
        <authorList>
            <person name="Cowan J."/>
            <person name="Tariq M."/>
            <person name="Ware S.M."/>
        </authorList>
    </citation>
    <scope>VARIANTS CHTD1 CYS-17; ALA-53 INS; CYS-109; ALA-217 AND GLY-447</scope>
    <scope>VARIANTS HTX1 CYS-17 AND ALA-217</scope>
    <scope>VARIANT VACTERLX ASN-318</scope>
    <scope>CHARACTERIZATION OF VARIANTS CHTD1 ALA-53 INS; CYS-109; ALA-217 AND GLY-447</scope>
    <scope>CHARACTERIZATION OF VARIANTS HTX1 CYS-17 AND ALA-217</scope>
    <scope>CHARACTERIZATION OF VARIANT VACTERLX ASN-318</scope>
</reference>